<organism>
    <name type="scientific">Aliivibrio fischeri (strain ATCC 700601 / ES114)</name>
    <name type="common">Vibrio fischeri</name>
    <dbReference type="NCBI Taxonomy" id="312309"/>
    <lineage>
        <taxon>Bacteria</taxon>
        <taxon>Pseudomonadati</taxon>
        <taxon>Pseudomonadota</taxon>
        <taxon>Gammaproteobacteria</taxon>
        <taxon>Vibrionales</taxon>
        <taxon>Vibrionaceae</taxon>
        <taxon>Aliivibrio</taxon>
    </lineage>
</organism>
<protein>
    <recommendedName>
        <fullName evidence="1">Translational regulator CsrA</fullName>
    </recommendedName>
    <alternativeName>
        <fullName evidence="1">Carbon storage regulator</fullName>
    </alternativeName>
</protein>
<dbReference type="EMBL" id="CP000020">
    <property type="protein sequence ID" value="AAW85033.1"/>
    <property type="molecule type" value="Genomic_DNA"/>
</dbReference>
<dbReference type="RefSeq" id="WP_005417777.1">
    <property type="nucleotide sequence ID" value="NZ_CAWLES010000001.1"/>
</dbReference>
<dbReference type="RefSeq" id="YP_203921.1">
    <property type="nucleotide sequence ID" value="NC_006840.2"/>
</dbReference>
<dbReference type="SMR" id="Q5E7G3"/>
<dbReference type="STRING" id="312309.VF_0538"/>
<dbReference type="EnsemblBacteria" id="AAW85033">
    <property type="protein sequence ID" value="AAW85033"/>
    <property type="gene ID" value="VF_0538"/>
</dbReference>
<dbReference type="GeneID" id="56275202"/>
<dbReference type="KEGG" id="vfi:VF_0538"/>
<dbReference type="PATRIC" id="fig|312309.11.peg.530"/>
<dbReference type="eggNOG" id="COG1551">
    <property type="taxonomic scope" value="Bacteria"/>
</dbReference>
<dbReference type="HOGENOM" id="CLU_164837_2_2_6"/>
<dbReference type="OrthoDB" id="9809061at2"/>
<dbReference type="Proteomes" id="UP000000537">
    <property type="component" value="Chromosome I"/>
</dbReference>
<dbReference type="GO" id="GO:0005829">
    <property type="term" value="C:cytosol"/>
    <property type="evidence" value="ECO:0007669"/>
    <property type="project" value="TreeGrafter"/>
</dbReference>
<dbReference type="GO" id="GO:0048027">
    <property type="term" value="F:mRNA 5'-UTR binding"/>
    <property type="evidence" value="ECO:0007669"/>
    <property type="project" value="UniProtKB-UniRule"/>
</dbReference>
<dbReference type="GO" id="GO:0006402">
    <property type="term" value="P:mRNA catabolic process"/>
    <property type="evidence" value="ECO:0007669"/>
    <property type="project" value="InterPro"/>
</dbReference>
<dbReference type="GO" id="GO:0045947">
    <property type="term" value="P:negative regulation of translational initiation"/>
    <property type="evidence" value="ECO:0007669"/>
    <property type="project" value="UniProtKB-UniRule"/>
</dbReference>
<dbReference type="GO" id="GO:0045948">
    <property type="term" value="P:positive regulation of translational initiation"/>
    <property type="evidence" value="ECO:0007669"/>
    <property type="project" value="UniProtKB-UniRule"/>
</dbReference>
<dbReference type="GO" id="GO:0006109">
    <property type="term" value="P:regulation of carbohydrate metabolic process"/>
    <property type="evidence" value="ECO:0007669"/>
    <property type="project" value="UniProtKB-UniRule"/>
</dbReference>
<dbReference type="FunFam" id="2.60.40.4380:FF:000001">
    <property type="entry name" value="Translational regulator CsrA"/>
    <property type="match status" value="1"/>
</dbReference>
<dbReference type="Gene3D" id="2.60.40.4380">
    <property type="entry name" value="Translational regulator CsrA"/>
    <property type="match status" value="1"/>
</dbReference>
<dbReference type="HAMAP" id="MF_00167">
    <property type="entry name" value="CsrA"/>
    <property type="match status" value="1"/>
</dbReference>
<dbReference type="InterPro" id="IPR003751">
    <property type="entry name" value="CsrA"/>
</dbReference>
<dbReference type="InterPro" id="IPR036107">
    <property type="entry name" value="CsrA_sf"/>
</dbReference>
<dbReference type="NCBIfam" id="TIGR00202">
    <property type="entry name" value="csrA"/>
    <property type="match status" value="1"/>
</dbReference>
<dbReference type="NCBIfam" id="NF002469">
    <property type="entry name" value="PRK01712.1"/>
    <property type="match status" value="1"/>
</dbReference>
<dbReference type="PANTHER" id="PTHR34984">
    <property type="entry name" value="CARBON STORAGE REGULATOR"/>
    <property type="match status" value="1"/>
</dbReference>
<dbReference type="PANTHER" id="PTHR34984:SF1">
    <property type="entry name" value="CARBON STORAGE REGULATOR"/>
    <property type="match status" value="1"/>
</dbReference>
<dbReference type="Pfam" id="PF02599">
    <property type="entry name" value="CsrA"/>
    <property type="match status" value="1"/>
</dbReference>
<dbReference type="SUPFAM" id="SSF117130">
    <property type="entry name" value="CsrA-like"/>
    <property type="match status" value="1"/>
</dbReference>
<sequence>MLILTRRVGETLMIGDEVTVTVLGVKGNQVRIGVNAPKEVSVHREEIYMRIQAEKGTPAASQGNF</sequence>
<name>CSRA_ALIF1</name>
<evidence type="ECO:0000255" key="1">
    <source>
        <dbReference type="HAMAP-Rule" id="MF_00167"/>
    </source>
</evidence>
<comment type="function">
    <text evidence="1">A key translational regulator that binds mRNA to regulate translation initiation and/or mRNA stability. Mediates global changes in gene expression, shifting from rapid growth to stress survival by linking envelope stress, the stringent response and the catabolite repression systems. Usually binds in the 5'-UTR; binding at or near the Shine-Dalgarno sequence prevents ribosome-binding, repressing translation, binding elsewhere in the 5'-UTR can activate translation and/or stabilize the mRNA. Its function is antagonized by small RNA(s).</text>
</comment>
<comment type="subunit">
    <text evidence="1">Homodimer; the beta-strands of each monomer intercalate to form a hydrophobic core, while the alpha-helices form wings that extend away from the core.</text>
</comment>
<comment type="subcellular location">
    <subcellularLocation>
        <location evidence="1">Cytoplasm</location>
    </subcellularLocation>
</comment>
<comment type="similarity">
    <text evidence="1">Belongs to the CsrA/RsmA family.</text>
</comment>
<feature type="chain" id="PRO_1000023436" description="Translational regulator CsrA">
    <location>
        <begin position="1"/>
        <end position="65"/>
    </location>
</feature>
<proteinExistence type="inferred from homology"/>
<reference key="1">
    <citation type="journal article" date="2005" name="Proc. Natl. Acad. Sci. U.S.A.">
        <title>Complete genome sequence of Vibrio fischeri: a symbiotic bacterium with pathogenic congeners.</title>
        <authorList>
            <person name="Ruby E.G."/>
            <person name="Urbanowski M."/>
            <person name="Campbell J."/>
            <person name="Dunn A."/>
            <person name="Faini M."/>
            <person name="Gunsalus R."/>
            <person name="Lostroh P."/>
            <person name="Lupp C."/>
            <person name="McCann J."/>
            <person name="Millikan D."/>
            <person name="Schaefer A."/>
            <person name="Stabb E."/>
            <person name="Stevens A."/>
            <person name="Visick K."/>
            <person name="Whistler C."/>
            <person name="Greenberg E.P."/>
        </authorList>
    </citation>
    <scope>NUCLEOTIDE SEQUENCE [LARGE SCALE GENOMIC DNA]</scope>
    <source>
        <strain>ATCC 700601 / ES114</strain>
    </source>
</reference>
<keyword id="KW-0010">Activator</keyword>
<keyword id="KW-0963">Cytoplasm</keyword>
<keyword id="KW-1185">Reference proteome</keyword>
<keyword id="KW-0678">Repressor</keyword>
<keyword id="KW-0694">RNA-binding</keyword>
<keyword id="KW-0810">Translation regulation</keyword>
<gene>
    <name evidence="1" type="primary">csrA</name>
    <name type="ordered locus">VF_0538</name>
</gene>
<accession>Q5E7G3</accession>